<keyword id="KW-0067">ATP-binding</keyword>
<keyword id="KW-0963">Cytoplasm</keyword>
<keyword id="KW-0460">Magnesium</keyword>
<keyword id="KW-0479">Metal-binding</keyword>
<keyword id="KW-0547">Nucleotide-binding</keyword>
<keyword id="KW-0554">One-carbon metabolism</keyword>
<keyword id="KW-0630">Potassium</keyword>
<keyword id="KW-0808">Transferase</keyword>
<reference key="1">
    <citation type="journal article" date="2009" name="Proc. Natl. Acad. Sci. U.S.A.">
        <title>Hamiltonella defensa, genome evolution of protective bacterial endosymbiont from pathogenic ancestors.</title>
        <authorList>
            <person name="Degnan P.H."/>
            <person name="Yu Y."/>
            <person name="Sisneros N."/>
            <person name="Wing R.A."/>
            <person name="Moran N.A."/>
        </authorList>
    </citation>
    <scope>NUCLEOTIDE SEQUENCE [LARGE SCALE GENOMIC DNA]</scope>
    <source>
        <strain>5AT</strain>
    </source>
</reference>
<evidence type="ECO:0000255" key="1">
    <source>
        <dbReference type="HAMAP-Rule" id="MF_00086"/>
    </source>
</evidence>
<feature type="chain" id="PRO_1000202620" description="S-adenosylmethionine synthase">
    <location>
        <begin position="1"/>
        <end position="385"/>
    </location>
</feature>
<feature type="region of interest" description="Flexible loop" evidence="1">
    <location>
        <begin position="99"/>
        <end position="109"/>
    </location>
</feature>
<feature type="binding site" description="in other chain" evidence="1">
    <location>
        <position position="15"/>
    </location>
    <ligand>
        <name>ATP</name>
        <dbReference type="ChEBI" id="CHEBI:30616"/>
        <note>ligand shared between two neighboring subunits</note>
    </ligand>
</feature>
<feature type="binding site" evidence="1">
    <location>
        <position position="17"/>
    </location>
    <ligand>
        <name>Mg(2+)</name>
        <dbReference type="ChEBI" id="CHEBI:18420"/>
    </ligand>
</feature>
<feature type="binding site" evidence="1">
    <location>
        <position position="43"/>
    </location>
    <ligand>
        <name>K(+)</name>
        <dbReference type="ChEBI" id="CHEBI:29103"/>
    </ligand>
</feature>
<feature type="binding site" description="in other chain" evidence="1">
    <location>
        <position position="56"/>
    </location>
    <ligand>
        <name>L-methionine</name>
        <dbReference type="ChEBI" id="CHEBI:57844"/>
        <note>ligand shared between two neighboring subunits</note>
    </ligand>
</feature>
<feature type="binding site" description="in other chain" evidence="1">
    <location>
        <position position="99"/>
    </location>
    <ligand>
        <name>L-methionine</name>
        <dbReference type="ChEBI" id="CHEBI:57844"/>
        <note>ligand shared between two neighboring subunits</note>
    </ligand>
</feature>
<feature type="binding site" description="in other chain" evidence="1">
    <location>
        <begin position="164"/>
        <end position="166"/>
    </location>
    <ligand>
        <name>ATP</name>
        <dbReference type="ChEBI" id="CHEBI:30616"/>
        <note>ligand shared between two neighboring subunits</note>
    </ligand>
</feature>
<feature type="binding site" description="in other chain" evidence="1">
    <location>
        <begin position="230"/>
        <end position="231"/>
    </location>
    <ligand>
        <name>ATP</name>
        <dbReference type="ChEBI" id="CHEBI:30616"/>
        <note>ligand shared between two neighboring subunits</note>
    </ligand>
</feature>
<feature type="binding site" evidence="1">
    <location>
        <position position="239"/>
    </location>
    <ligand>
        <name>ATP</name>
        <dbReference type="ChEBI" id="CHEBI:30616"/>
        <note>ligand shared between two neighboring subunits</note>
    </ligand>
</feature>
<feature type="binding site" evidence="1">
    <location>
        <position position="239"/>
    </location>
    <ligand>
        <name>L-methionine</name>
        <dbReference type="ChEBI" id="CHEBI:57844"/>
        <note>ligand shared between two neighboring subunits</note>
    </ligand>
</feature>
<feature type="binding site" description="in other chain" evidence="1">
    <location>
        <begin position="245"/>
        <end position="246"/>
    </location>
    <ligand>
        <name>ATP</name>
        <dbReference type="ChEBI" id="CHEBI:30616"/>
        <note>ligand shared between two neighboring subunits</note>
    </ligand>
</feature>
<feature type="binding site" evidence="1">
    <location>
        <position position="262"/>
    </location>
    <ligand>
        <name>ATP</name>
        <dbReference type="ChEBI" id="CHEBI:30616"/>
        <note>ligand shared between two neighboring subunits</note>
    </ligand>
</feature>
<feature type="binding site" evidence="1">
    <location>
        <position position="266"/>
    </location>
    <ligand>
        <name>ATP</name>
        <dbReference type="ChEBI" id="CHEBI:30616"/>
        <note>ligand shared between two neighboring subunits</note>
    </ligand>
</feature>
<feature type="binding site" description="in other chain" evidence="1">
    <location>
        <position position="270"/>
    </location>
    <ligand>
        <name>L-methionine</name>
        <dbReference type="ChEBI" id="CHEBI:57844"/>
        <note>ligand shared between two neighboring subunits</note>
    </ligand>
</feature>
<gene>
    <name evidence="1" type="primary">metK</name>
    <name type="ordered locus">HDEF_0506</name>
</gene>
<protein>
    <recommendedName>
        <fullName evidence="1">S-adenosylmethionine synthase</fullName>
        <shortName evidence="1">AdoMet synthase</shortName>
        <ecNumber evidence="1">2.5.1.6</ecNumber>
    </recommendedName>
    <alternativeName>
        <fullName evidence="1">MAT</fullName>
    </alternativeName>
    <alternativeName>
        <fullName evidence="1">Methionine adenosyltransferase</fullName>
    </alternativeName>
</protein>
<sequence length="385" mass="42308">MPHQLFTSESVSEGHPDKIADQISDAVLDAILIQDPKARVACETYVKTGMVIVGGEITTSAWVDIEEITRCTLAEIGYVHSDMGFDAHSCAVLSAIGKQSPDINQGVDRIDPLDQGAGDQGMMFGYATNETDVLMPAPITYSHRLVKRQSEMRKIGQLPWLRPDAKSQITFKYDKGYAVAIDTIVFSTQHEEDVTQKQLEEAVMEEIIKPVIPTQWLSSSTKYFINPTGRFVIGGPMGDCGLTGRKIIVDTYGGMARHGGGAFSGKDPSKVDRSAAYAARYVAKNIVAAGLADRCEIQISYAIGVANPTSIMLETFGTEKITIQKIMSLIHQHFDLRPYGLIKMLDLLKPIYRATAAYGHFGRDVFPWEATDKAELLREQAGLNQ</sequence>
<comment type="function">
    <text evidence="1">Catalyzes the formation of S-adenosylmethionine (AdoMet) from methionine and ATP. The overall synthetic reaction is composed of two sequential steps, AdoMet formation and the subsequent tripolyphosphate hydrolysis which occurs prior to release of AdoMet from the enzyme.</text>
</comment>
<comment type="catalytic activity">
    <reaction evidence="1">
        <text>L-methionine + ATP + H2O = S-adenosyl-L-methionine + phosphate + diphosphate</text>
        <dbReference type="Rhea" id="RHEA:21080"/>
        <dbReference type="ChEBI" id="CHEBI:15377"/>
        <dbReference type="ChEBI" id="CHEBI:30616"/>
        <dbReference type="ChEBI" id="CHEBI:33019"/>
        <dbReference type="ChEBI" id="CHEBI:43474"/>
        <dbReference type="ChEBI" id="CHEBI:57844"/>
        <dbReference type="ChEBI" id="CHEBI:59789"/>
        <dbReference type="EC" id="2.5.1.6"/>
    </reaction>
</comment>
<comment type="cofactor">
    <cofactor evidence="1">
        <name>Mg(2+)</name>
        <dbReference type="ChEBI" id="CHEBI:18420"/>
    </cofactor>
    <text evidence="1">Binds 2 divalent ions per subunit.</text>
</comment>
<comment type="cofactor">
    <cofactor evidence="1">
        <name>K(+)</name>
        <dbReference type="ChEBI" id="CHEBI:29103"/>
    </cofactor>
    <text evidence="1">Binds 1 potassium ion per subunit.</text>
</comment>
<comment type="pathway">
    <text evidence="1">Amino-acid biosynthesis; S-adenosyl-L-methionine biosynthesis; S-adenosyl-L-methionine from L-methionine: step 1/1.</text>
</comment>
<comment type="subunit">
    <text evidence="1">Homotetramer; dimer of dimers.</text>
</comment>
<comment type="subcellular location">
    <subcellularLocation>
        <location evidence="1">Cytoplasm</location>
    </subcellularLocation>
</comment>
<comment type="similarity">
    <text evidence="1">Belongs to the AdoMet synthase family.</text>
</comment>
<dbReference type="EC" id="2.5.1.6" evidence="1"/>
<dbReference type="EMBL" id="CP001277">
    <property type="protein sequence ID" value="ACQ67260.1"/>
    <property type="molecule type" value="Genomic_DNA"/>
</dbReference>
<dbReference type="RefSeq" id="WP_012738217.1">
    <property type="nucleotide sequence ID" value="NC_012751.1"/>
</dbReference>
<dbReference type="SMR" id="C4K3W7"/>
<dbReference type="STRING" id="572265.HDEF_0506"/>
<dbReference type="GeneID" id="66260392"/>
<dbReference type="KEGG" id="hde:HDEF_0506"/>
<dbReference type="eggNOG" id="COG0192">
    <property type="taxonomic scope" value="Bacteria"/>
</dbReference>
<dbReference type="HOGENOM" id="CLU_041802_1_1_6"/>
<dbReference type="UniPathway" id="UPA00315">
    <property type="reaction ID" value="UER00080"/>
</dbReference>
<dbReference type="Proteomes" id="UP000002334">
    <property type="component" value="Chromosome"/>
</dbReference>
<dbReference type="GO" id="GO:0005737">
    <property type="term" value="C:cytoplasm"/>
    <property type="evidence" value="ECO:0007669"/>
    <property type="project" value="UniProtKB-SubCell"/>
</dbReference>
<dbReference type="GO" id="GO:0005524">
    <property type="term" value="F:ATP binding"/>
    <property type="evidence" value="ECO:0007669"/>
    <property type="project" value="UniProtKB-UniRule"/>
</dbReference>
<dbReference type="GO" id="GO:0000287">
    <property type="term" value="F:magnesium ion binding"/>
    <property type="evidence" value="ECO:0007669"/>
    <property type="project" value="UniProtKB-UniRule"/>
</dbReference>
<dbReference type="GO" id="GO:0004478">
    <property type="term" value="F:methionine adenosyltransferase activity"/>
    <property type="evidence" value="ECO:0007669"/>
    <property type="project" value="UniProtKB-UniRule"/>
</dbReference>
<dbReference type="GO" id="GO:0006730">
    <property type="term" value="P:one-carbon metabolic process"/>
    <property type="evidence" value="ECO:0007669"/>
    <property type="project" value="UniProtKB-KW"/>
</dbReference>
<dbReference type="GO" id="GO:0006556">
    <property type="term" value="P:S-adenosylmethionine biosynthetic process"/>
    <property type="evidence" value="ECO:0007669"/>
    <property type="project" value="UniProtKB-UniRule"/>
</dbReference>
<dbReference type="CDD" id="cd18079">
    <property type="entry name" value="S-AdoMet_synt"/>
    <property type="match status" value="1"/>
</dbReference>
<dbReference type="FunFam" id="3.30.300.10:FF:000003">
    <property type="entry name" value="S-adenosylmethionine synthase"/>
    <property type="match status" value="1"/>
</dbReference>
<dbReference type="Gene3D" id="3.30.300.10">
    <property type="match status" value="3"/>
</dbReference>
<dbReference type="HAMAP" id="MF_00086">
    <property type="entry name" value="S_AdoMet_synth1"/>
    <property type="match status" value="1"/>
</dbReference>
<dbReference type="InterPro" id="IPR022631">
    <property type="entry name" value="ADOMET_SYNTHASE_CS"/>
</dbReference>
<dbReference type="InterPro" id="IPR022630">
    <property type="entry name" value="S-AdoMet_synt_C"/>
</dbReference>
<dbReference type="InterPro" id="IPR022629">
    <property type="entry name" value="S-AdoMet_synt_central"/>
</dbReference>
<dbReference type="InterPro" id="IPR022628">
    <property type="entry name" value="S-AdoMet_synt_N"/>
</dbReference>
<dbReference type="InterPro" id="IPR002133">
    <property type="entry name" value="S-AdoMet_synthetase"/>
</dbReference>
<dbReference type="InterPro" id="IPR022636">
    <property type="entry name" value="S-AdoMet_synthetase_sfam"/>
</dbReference>
<dbReference type="NCBIfam" id="TIGR01034">
    <property type="entry name" value="metK"/>
    <property type="match status" value="1"/>
</dbReference>
<dbReference type="PANTHER" id="PTHR11964">
    <property type="entry name" value="S-ADENOSYLMETHIONINE SYNTHETASE"/>
    <property type="match status" value="1"/>
</dbReference>
<dbReference type="Pfam" id="PF02773">
    <property type="entry name" value="S-AdoMet_synt_C"/>
    <property type="match status" value="1"/>
</dbReference>
<dbReference type="Pfam" id="PF02772">
    <property type="entry name" value="S-AdoMet_synt_M"/>
    <property type="match status" value="1"/>
</dbReference>
<dbReference type="Pfam" id="PF00438">
    <property type="entry name" value="S-AdoMet_synt_N"/>
    <property type="match status" value="1"/>
</dbReference>
<dbReference type="PIRSF" id="PIRSF000497">
    <property type="entry name" value="MAT"/>
    <property type="match status" value="1"/>
</dbReference>
<dbReference type="SUPFAM" id="SSF55973">
    <property type="entry name" value="S-adenosylmethionine synthetase"/>
    <property type="match status" value="3"/>
</dbReference>
<dbReference type="PROSITE" id="PS00376">
    <property type="entry name" value="ADOMET_SYNTHASE_1"/>
    <property type="match status" value="1"/>
</dbReference>
<dbReference type="PROSITE" id="PS00377">
    <property type="entry name" value="ADOMET_SYNTHASE_2"/>
    <property type="match status" value="1"/>
</dbReference>
<accession>C4K3W7</accession>
<proteinExistence type="inferred from homology"/>
<name>METK_HAMD5</name>
<organism>
    <name type="scientific">Hamiltonella defensa subsp. Acyrthosiphon pisum (strain 5AT)</name>
    <dbReference type="NCBI Taxonomy" id="572265"/>
    <lineage>
        <taxon>Bacteria</taxon>
        <taxon>Pseudomonadati</taxon>
        <taxon>Pseudomonadota</taxon>
        <taxon>Gammaproteobacteria</taxon>
        <taxon>Enterobacterales</taxon>
        <taxon>Enterobacteriaceae</taxon>
        <taxon>aphid secondary symbionts</taxon>
        <taxon>Candidatus Hamiltonella</taxon>
    </lineage>
</organism>